<protein>
    <recommendedName>
        <fullName>RUN domain-containing protein 3B</fullName>
    </recommendedName>
</protein>
<name>RUN3B_MACFA</name>
<feature type="chain" id="PRO_0000336050" description="RUN domain-containing protein 3B">
    <location>
        <begin position="1"/>
        <end position="456"/>
    </location>
</feature>
<feature type="domain" description="RUN" evidence="4">
    <location>
        <begin position="57"/>
        <end position="189"/>
    </location>
</feature>
<feature type="region of interest" description="Disordered" evidence="5">
    <location>
        <begin position="1"/>
        <end position="26"/>
    </location>
</feature>
<feature type="region of interest" description="Disordered" evidence="5">
    <location>
        <begin position="382"/>
        <end position="405"/>
    </location>
</feature>
<feature type="coiled-coil region" evidence="3">
    <location>
        <begin position="300"/>
        <end position="325"/>
    </location>
</feature>
<feature type="compositionally biased region" description="Gly residues" evidence="5">
    <location>
        <begin position="8"/>
        <end position="21"/>
    </location>
</feature>
<feature type="modified residue" description="Omega-N-methylarginine" evidence="2">
    <location>
        <position position="13"/>
    </location>
</feature>
<feature type="modified residue" description="Phosphoserine" evidence="2">
    <location>
        <position position="215"/>
    </location>
</feature>
<feature type="modified residue" description="Phosphoserine" evidence="2">
    <location>
        <position position="216"/>
    </location>
</feature>
<comment type="subunit">
    <text evidence="1">Interacts with RAP2A.</text>
</comment>
<comment type="similarity">
    <text evidence="6">Belongs to the RUNDC3 family.</text>
</comment>
<accession>Q4R7B9</accession>
<proteinExistence type="evidence at transcript level"/>
<organism>
    <name type="scientific">Macaca fascicularis</name>
    <name type="common">Crab-eating macaque</name>
    <name type="synonym">Cynomolgus monkey</name>
    <dbReference type="NCBI Taxonomy" id="9541"/>
    <lineage>
        <taxon>Eukaryota</taxon>
        <taxon>Metazoa</taxon>
        <taxon>Chordata</taxon>
        <taxon>Craniata</taxon>
        <taxon>Vertebrata</taxon>
        <taxon>Euteleostomi</taxon>
        <taxon>Mammalia</taxon>
        <taxon>Eutheria</taxon>
        <taxon>Euarchontoglires</taxon>
        <taxon>Primates</taxon>
        <taxon>Haplorrhini</taxon>
        <taxon>Catarrhini</taxon>
        <taxon>Cercopithecidae</taxon>
        <taxon>Cercopithecinae</taxon>
        <taxon>Macaca</taxon>
    </lineage>
</organism>
<sequence length="456" mass="50839">MASRSLGGLSGIRGGGGGGGKKSLSSRNAAVERRNLITVCRFSVKTLIDRSCFETIDDSSPEFNNFAAILEQILSHRLKGQVTWFGYESPRSFWDYIRVACRKVSQNCICSIENMENVSSSRAKGRAWIRVALMEKHLSEYISTALRDFKTTRRFYEDGAIVLGEEANMLAGMLLGLNAIDFSFCLKGEGLDGSFPAVIDYTPYLKYIQSSDSISSDEEELRTLGSSGSESSTPENVGPPFLMDENSWFNKCKRVKQKYQLTLEQKGYLEELLRLRENQLSESVSQNKILLQRIEDSDLAHKLEKEQLEYIIVELQDQLTVLKNNDLRSRQELTAHLTNQWPSPGALDVNAVALDTLLYRKHNKQWYEKSYQSLDQLSAEVSLSQTSLDPGQSQEGDGKQDTLNIMSEGKEDTPSLLGLCGSLTSVASYKSLTSLKSNDYLASPTTEMTSPGLTPS</sequence>
<dbReference type="EMBL" id="AB168901">
    <property type="protein sequence ID" value="BAE01003.1"/>
    <property type="molecule type" value="mRNA"/>
</dbReference>
<dbReference type="RefSeq" id="NP_001270186.1">
    <property type="nucleotide sequence ID" value="NM_001283257.1"/>
</dbReference>
<dbReference type="RefSeq" id="XP_045244649.1">
    <property type="nucleotide sequence ID" value="XM_045388714.2"/>
</dbReference>
<dbReference type="SMR" id="Q4R7B9"/>
<dbReference type="STRING" id="9541.ENSMFAP00000004715"/>
<dbReference type="Ensembl" id="ENSMFAT00000023396.2">
    <property type="protein sequence ID" value="ENSMFAP00000004730.1"/>
    <property type="gene ID" value="ENSMFAG00000002053.2"/>
</dbReference>
<dbReference type="GeneID" id="101926171"/>
<dbReference type="VEuPathDB" id="HostDB:ENSMFAG00000002053"/>
<dbReference type="eggNOG" id="KOG4381">
    <property type="taxonomic scope" value="Eukaryota"/>
</dbReference>
<dbReference type="GeneTree" id="ENSGT00940000159175"/>
<dbReference type="Proteomes" id="UP000233100">
    <property type="component" value="Chromosome 3"/>
</dbReference>
<dbReference type="Bgee" id="ENSMFAG00000002053">
    <property type="expression patterns" value="Expressed in liver and 13 other cell types or tissues"/>
</dbReference>
<dbReference type="CDD" id="cd17700">
    <property type="entry name" value="RUN_RUNDC3B"/>
    <property type="match status" value="1"/>
</dbReference>
<dbReference type="Gene3D" id="1.20.58.900">
    <property type="match status" value="1"/>
</dbReference>
<dbReference type="InterPro" id="IPR004012">
    <property type="entry name" value="Run_dom"/>
</dbReference>
<dbReference type="InterPro" id="IPR037213">
    <property type="entry name" value="Run_dom_sf"/>
</dbReference>
<dbReference type="InterPro" id="IPR047339">
    <property type="entry name" value="RUN_RUNDC3B"/>
</dbReference>
<dbReference type="InterPro" id="IPR047340">
    <property type="entry name" value="RUNDC3A_B"/>
</dbReference>
<dbReference type="PANTHER" id="PTHR46251">
    <property type="entry name" value="RUN DOMAIN-CONTAINING 3 PROTEIN RUNDC3"/>
    <property type="match status" value="1"/>
</dbReference>
<dbReference type="PANTHER" id="PTHR46251:SF1">
    <property type="entry name" value="RUN DOMAIN-CONTAINING PROTEIN 3B"/>
    <property type="match status" value="1"/>
</dbReference>
<dbReference type="Pfam" id="PF02759">
    <property type="entry name" value="RUN"/>
    <property type="match status" value="1"/>
</dbReference>
<dbReference type="SMART" id="SM00593">
    <property type="entry name" value="RUN"/>
    <property type="match status" value="1"/>
</dbReference>
<dbReference type="SUPFAM" id="SSF140741">
    <property type="entry name" value="RUN domain-like"/>
    <property type="match status" value="1"/>
</dbReference>
<dbReference type="PROSITE" id="PS50826">
    <property type="entry name" value="RUN"/>
    <property type="match status" value="1"/>
</dbReference>
<keyword id="KW-0175">Coiled coil</keyword>
<keyword id="KW-0488">Methylation</keyword>
<keyword id="KW-0597">Phosphoprotein</keyword>
<keyword id="KW-1185">Reference proteome</keyword>
<gene>
    <name type="primary">RUNDC3B</name>
    <name type="ORF">QtsA-15652</name>
</gene>
<reference key="1">
    <citation type="submission" date="2005-06" db="EMBL/GenBank/DDBJ databases">
        <title>DNA sequences of macaque genes expressed in brain or testis and its evolutionary implications.</title>
        <authorList>
            <consortium name="International consortium for macaque cDNA sequencing and analysis"/>
        </authorList>
    </citation>
    <scope>NUCLEOTIDE SEQUENCE [LARGE SCALE MRNA]</scope>
    <source>
        <tissue>Testis</tissue>
    </source>
</reference>
<evidence type="ECO:0000250" key="1"/>
<evidence type="ECO:0000250" key="2">
    <source>
        <dbReference type="UniProtKB" id="Q6PDC0"/>
    </source>
</evidence>
<evidence type="ECO:0000255" key="3"/>
<evidence type="ECO:0000255" key="4">
    <source>
        <dbReference type="PROSITE-ProRule" id="PRU00178"/>
    </source>
</evidence>
<evidence type="ECO:0000256" key="5">
    <source>
        <dbReference type="SAM" id="MobiDB-lite"/>
    </source>
</evidence>
<evidence type="ECO:0000305" key="6"/>